<feature type="chain" id="PRO_0000170579" description="Guanylate kinase">
    <location>
        <begin position="1"/>
        <end position="208"/>
    </location>
</feature>
<feature type="domain" description="Guanylate kinase-like">
    <location>
        <begin position="4"/>
        <end position="185"/>
    </location>
</feature>
<feature type="binding site" evidence="1">
    <location>
        <begin position="11"/>
        <end position="18"/>
    </location>
    <ligand>
        <name>ATP</name>
        <dbReference type="ChEBI" id="CHEBI:30616"/>
    </ligand>
</feature>
<dbReference type="EC" id="2.7.4.8"/>
<dbReference type="EMBL" id="AE004439">
    <property type="protein sequence ID" value="AAK03006.1"/>
    <property type="molecule type" value="Genomic_DNA"/>
</dbReference>
<dbReference type="RefSeq" id="WP_005722822.1">
    <property type="nucleotide sequence ID" value="NC_002663.1"/>
</dbReference>
<dbReference type="SMR" id="P57888"/>
<dbReference type="STRING" id="272843.PM0922"/>
<dbReference type="EnsemblBacteria" id="AAK03006">
    <property type="protein sequence ID" value="AAK03006"/>
    <property type="gene ID" value="PM0922"/>
</dbReference>
<dbReference type="GeneID" id="77206225"/>
<dbReference type="KEGG" id="pmu:PM0922"/>
<dbReference type="PATRIC" id="fig|272843.6.peg.932"/>
<dbReference type="HOGENOM" id="CLU_001715_1_0_6"/>
<dbReference type="OrthoDB" id="9808150at2"/>
<dbReference type="Proteomes" id="UP000000809">
    <property type="component" value="Chromosome"/>
</dbReference>
<dbReference type="GO" id="GO:0005829">
    <property type="term" value="C:cytosol"/>
    <property type="evidence" value="ECO:0007669"/>
    <property type="project" value="TreeGrafter"/>
</dbReference>
<dbReference type="GO" id="GO:0005524">
    <property type="term" value="F:ATP binding"/>
    <property type="evidence" value="ECO:0007669"/>
    <property type="project" value="UniProtKB-UniRule"/>
</dbReference>
<dbReference type="GO" id="GO:0004385">
    <property type="term" value="F:guanylate kinase activity"/>
    <property type="evidence" value="ECO:0007669"/>
    <property type="project" value="UniProtKB-UniRule"/>
</dbReference>
<dbReference type="CDD" id="cd00071">
    <property type="entry name" value="GMPK"/>
    <property type="match status" value="1"/>
</dbReference>
<dbReference type="FunFam" id="3.40.50.300:FF:000855">
    <property type="entry name" value="Guanylate kinase"/>
    <property type="match status" value="1"/>
</dbReference>
<dbReference type="FunFam" id="3.30.63.10:FF:000002">
    <property type="entry name" value="Guanylate kinase 1"/>
    <property type="match status" value="1"/>
</dbReference>
<dbReference type="Gene3D" id="3.30.63.10">
    <property type="entry name" value="Guanylate Kinase phosphate binding domain"/>
    <property type="match status" value="1"/>
</dbReference>
<dbReference type="Gene3D" id="3.40.50.300">
    <property type="entry name" value="P-loop containing nucleotide triphosphate hydrolases"/>
    <property type="match status" value="2"/>
</dbReference>
<dbReference type="HAMAP" id="MF_00328">
    <property type="entry name" value="Guanylate_kinase"/>
    <property type="match status" value="1"/>
</dbReference>
<dbReference type="InterPro" id="IPR008145">
    <property type="entry name" value="GK/Ca_channel_bsu"/>
</dbReference>
<dbReference type="InterPro" id="IPR008144">
    <property type="entry name" value="Guanylate_kin-like_dom"/>
</dbReference>
<dbReference type="InterPro" id="IPR017665">
    <property type="entry name" value="Guanylate_kinase"/>
</dbReference>
<dbReference type="InterPro" id="IPR020590">
    <property type="entry name" value="Guanylate_kinase_CS"/>
</dbReference>
<dbReference type="InterPro" id="IPR027417">
    <property type="entry name" value="P-loop_NTPase"/>
</dbReference>
<dbReference type="NCBIfam" id="TIGR03263">
    <property type="entry name" value="guanyl_kin"/>
    <property type="match status" value="1"/>
</dbReference>
<dbReference type="PANTHER" id="PTHR23117:SF13">
    <property type="entry name" value="GUANYLATE KINASE"/>
    <property type="match status" value="1"/>
</dbReference>
<dbReference type="PANTHER" id="PTHR23117">
    <property type="entry name" value="GUANYLATE KINASE-RELATED"/>
    <property type="match status" value="1"/>
</dbReference>
<dbReference type="Pfam" id="PF00625">
    <property type="entry name" value="Guanylate_kin"/>
    <property type="match status" value="1"/>
</dbReference>
<dbReference type="SMART" id="SM00072">
    <property type="entry name" value="GuKc"/>
    <property type="match status" value="1"/>
</dbReference>
<dbReference type="SUPFAM" id="SSF52540">
    <property type="entry name" value="P-loop containing nucleoside triphosphate hydrolases"/>
    <property type="match status" value="1"/>
</dbReference>
<dbReference type="PROSITE" id="PS00856">
    <property type="entry name" value="GUANYLATE_KINASE_1"/>
    <property type="match status" value="1"/>
</dbReference>
<dbReference type="PROSITE" id="PS50052">
    <property type="entry name" value="GUANYLATE_KINASE_2"/>
    <property type="match status" value="1"/>
</dbReference>
<keyword id="KW-0067">ATP-binding</keyword>
<keyword id="KW-0963">Cytoplasm</keyword>
<keyword id="KW-0418">Kinase</keyword>
<keyword id="KW-0547">Nucleotide-binding</keyword>
<keyword id="KW-1185">Reference proteome</keyword>
<keyword id="KW-0808">Transferase</keyword>
<reference key="1">
    <citation type="journal article" date="2001" name="Proc. Natl. Acad. Sci. U.S.A.">
        <title>Complete genomic sequence of Pasteurella multocida Pm70.</title>
        <authorList>
            <person name="May B.J."/>
            <person name="Zhang Q."/>
            <person name="Li L.L."/>
            <person name="Paustian M.L."/>
            <person name="Whittam T.S."/>
            <person name="Kapur V."/>
        </authorList>
    </citation>
    <scope>NUCLEOTIDE SEQUENCE [LARGE SCALE GENOMIC DNA]</scope>
    <source>
        <strain>Pm70</strain>
    </source>
</reference>
<sequence>MAQGNLYILSAPSGAGKSSLISALLNQQQDNKMMVSVSHTTRQPRPGEQEGVHYYFVSVEAFESLIEQDLFLEYAKVFGGNYYGTSLPAIEENLAKGIDVFLDIDWQGAQQIRQKVPNVKSIFILPPSLAELERRLIGRGQDSTEVIAARMSKAIDEISHYNEYDYVIVNDVFEQALADFQAILRAERLTLTHQQKQNQALIEQLLAK</sequence>
<proteinExistence type="inferred from homology"/>
<accession>P57888</accession>
<evidence type="ECO:0000250" key="1"/>
<evidence type="ECO:0000305" key="2"/>
<gene>
    <name type="primary">gmk</name>
    <name type="ordered locus">PM0922</name>
</gene>
<protein>
    <recommendedName>
        <fullName>Guanylate kinase</fullName>
        <ecNumber>2.7.4.8</ecNumber>
    </recommendedName>
    <alternativeName>
        <fullName>GMP kinase</fullName>
    </alternativeName>
</protein>
<name>KGUA_PASMU</name>
<organism>
    <name type="scientific">Pasteurella multocida (strain Pm70)</name>
    <dbReference type="NCBI Taxonomy" id="272843"/>
    <lineage>
        <taxon>Bacteria</taxon>
        <taxon>Pseudomonadati</taxon>
        <taxon>Pseudomonadota</taxon>
        <taxon>Gammaproteobacteria</taxon>
        <taxon>Pasteurellales</taxon>
        <taxon>Pasteurellaceae</taxon>
        <taxon>Pasteurella</taxon>
    </lineage>
</organism>
<comment type="function">
    <text evidence="1">Essential for recycling GMP and indirectly, cGMP.</text>
</comment>
<comment type="catalytic activity">
    <reaction>
        <text>GMP + ATP = GDP + ADP</text>
        <dbReference type="Rhea" id="RHEA:20780"/>
        <dbReference type="ChEBI" id="CHEBI:30616"/>
        <dbReference type="ChEBI" id="CHEBI:58115"/>
        <dbReference type="ChEBI" id="CHEBI:58189"/>
        <dbReference type="ChEBI" id="CHEBI:456216"/>
        <dbReference type="EC" id="2.7.4.8"/>
    </reaction>
</comment>
<comment type="subcellular location">
    <subcellularLocation>
        <location evidence="1">Cytoplasm</location>
    </subcellularLocation>
</comment>
<comment type="similarity">
    <text evidence="2">Belongs to the guanylate kinase family.</text>
</comment>